<name>LEPA_RHOPA</name>
<comment type="function">
    <text evidence="1">Required for accurate and efficient protein synthesis under certain stress conditions. May act as a fidelity factor of the translation reaction, by catalyzing a one-codon backward translocation of tRNAs on improperly translocated ribosomes. Back-translocation proceeds from a post-translocation (POST) complex to a pre-translocation (PRE) complex, thus giving elongation factor G a second chance to translocate the tRNAs correctly. Binds to ribosomes in a GTP-dependent manner.</text>
</comment>
<comment type="catalytic activity">
    <reaction evidence="1">
        <text>GTP + H2O = GDP + phosphate + H(+)</text>
        <dbReference type="Rhea" id="RHEA:19669"/>
        <dbReference type="ChEBI" id="CHEBI:15377"/>
        <dbReference type="ChEBI" id="CHEBI:15378"/>
        <dbReference type="ChEBI" id="CHEBI:37565"/>
        <dbReference type="ChEBI" id="CHEBI:43474"/>
        <dbReference type="ChEBI" id="CHEBI:58189"/>
        <dbReference type="EC" id="3.6.5.n1"/>
    </reaction>
</comment>
<comment type="subcellular location">
    <subcellularLocation>
        <location evidence="1">Cell inner membrane</location>
        <topology evidence="1">Peripheral membrane protein</topology>
        <orientation evidence="1">Cytoplasmic side</orientation>
    </subcellularLocation>
</comment>
<comment type="similarity">
    <text evidence="1">Belongs to the TRAFAC class translation factor GTPase superfamily. Classic translation factor GTPase family. LepA subfamily.</text>
</comment>
<accession>P60793</accession>
<gene>
    <name evidence="1" type="primary">lepA</name>
    <name type="ordered locus">RPA0352</name>
</gene>
<proteinExistence type="inferred from homology"/>
<evidence type="ECO:0000255" key="1">
    <source>
        <dbReference type="HAMAP-Rule" id="MF_00071"/>
    </source>
</evidence>
<reference key="1">
    <citation type="journal article" date="2004" name="Nat. Biotechnol.">
        <title>Complete genome sequence of the metabolically versatile photosynthetic bacterium Rhodopseudomonas palustris.</title>
        <authorList>
            <person name="Larimer F.W."/>
            <person name="Chain P."/>
            <person name="Hauser L."/>
            <person name="Lamerdin J.E."/>
            <person name="Malfatti S."/>
            <person name="Do L."/>
            <person name="Land M.L."/>
            <person name="Pelletier D.A."/>
            <person name="Beatty J.T."/>
            <person name="Lang A.S."/>
            <person name="Tabita F.R."/>
            <person name="Gibson J.L."/>
            <person name="Hanson T.E."/>
            <person name="Bobst C."/>
            <person name="Torres y Torres J.L."/>
            <person name="Peres C."/>
            <person name="Harrison F.H."/>
            <person name="Gibson J."/>
            <person name="Harwood C.S."/>
        </authorList>
    </citation>
    <scope>NUCLEOTIDE SEQUENCE [LARGE SCALE GENOMIC DNA]</scope>
    <source>
        <strain>ATCC BAA-98 / CGA009</strain>
    </source>
</reference>
<protein>
    <recommendedName>
        <fullName evidence="1">Elongation factor 4</fullName>
        <shortName evidence="1">EF-4</shortName>
        <ecNumber evidence="1">3.6.5.n1</ecNumber>
    </recommendedName>
    <alternativeName>
        <fullName evidence="1">Ribosomal back-translocase LepA</fullName>
    </alternativeName>
</protein>
<sequence length="603" mass="66745">MTTAPIDNIRNFSIVAHIDHGKSTLADRLIQITGGMSDREMAGKEQVLDSMDIERERGITIKAQTVRLKYRAHDGKDYIFNLMDTPGHVDFAYEVSRSLAACEGSLLVVDASQGVEAQTLANVYHALDAGHEIVPVLNKVDLPAAEPEKIKQQIEDVIGLDASDAVMISAKTGLGVPDVLEAIVTRLPPPKGDRDATLKALLVDSWYDVYLGVVVLVRVVDGVLKKGQRIRMMGTGAAYDVERVGYFTPKMVNVEELGPGEVGFITAAIKEVADTRVGDTITDDKKPVTDMLPGFKPAIPVVFCGLFPVDADDFETLRAAMGKLRLNDASFSFEMETSAALGFGFRCGFLGLLHLEIIQERLSREFDLDLIATAPSVIYKMKLTDGTEMEIHNPVDMPDVVKIAEIEEPWIEATILTPDEYLGSVLKLCQDRRGNQKELTYVGARAMVKYDLPLNEVVFDFYDRLKSVSKGYASFDYHLTDYKPADLVKMQILVNAEPVDALSMLVHRTRAEGRGRAMVEKMKELIPPHMFQIPIQAAIGGKVIARETVRALRKDVTAKCYGGDITRKRKLLEKQKEGKKKMRQFGKVDIPQEAFIAALKVDS</sequence>
<organism>
    <name type="scientific">Rhodopseudomonas palustris (strain ATCC BAA-98 / CGA009)</name>
    <dbReference type="NCBI Taxonomy" id="258594"/>
    <lineage>
        <taxon>Bacteria</taxon>
        <taxon>Pseudomonadati</taxon>
        <taxon>Pseudomonadota</taxon>
        <taxon>Alphaproteobacteria</taxon>
        <taxon>Hyphomicrobiales</taxon>
        <taxon>Nitrobacteraceae</taxon>
        <taxon>Rhodopseudomonas</taxon>
    </lineage>
</organism>
<dbReference type="EC" id="3.6.5.n1" evidence="1"/>
<dbReference type="EMBL" id="BX572594">
    <property type="protein sequence ID" value="CAE25796.1"/>
    <property type="molecule type" value="Genomic_DNA"/>
</dbReference>
<dbReference type="RefSeq" id="WP_011155920.1">
    <property type="nucleotide sequence ID" value="NZ_CP116810.1"/>
</dbReference>
<dbReference type="SMR" id="P60793"/>
<dbReference type="STRING" id="258594.RPA0352"/>
<dbReference type="GeneID" id="66891363"/>
<dbReference type="eggNOG" id="COG0481">
    <property type="taxonomic scope" value="Bacteria"/>
</dbReference>
<dbReference type="HOGENOM" id="CLU_009995_3_3_5"/>
<dbReference type="PhylomeDB" id="P60793"/>
<dbReference type="GO" id="GO:0005886">
    <property type="term" value="C:plasma membrane"/>
    <property type="evidence" value="ECO:0007669"/>
    <property type="project" value="UniProtKB-SubCell"/>
</dbReference>
<dbReference type="GO" id="GO:0005525">
    <property type="term" value="F:GTP binding"/>
    <property type="evidence" value="ECO:0007669"/>
    <property type="project" value="UniProtKB-UniRule"/>
</dbReference>
<dbReference type="GO" id="GO:0003924">
    <property type="term" value="F:GTPase activity"/>
    <property type="evidence" value="ECO:0007669"/>
    <property type="project" value="UniProtKB-UniRule"/>
</dbReference>
<dbReference type="GO" id="GO:0097216">
    <property type="term" value="F:guanosine tetraphosphate binding"/>
    <property type="evidence" value="ECO:0007669"/>
    <property type="project" value="UniProtKB-ARBA"/>
</dbReference>
<dbReference type="GO" id="GO:0043022">
    <property type="term" value="F:ribosome binding"/>
    <property type="evidence" value="ECO:0007669"/>
    <property type="project" value="UniProtKB-UniRule"/>
</dbReference>
<dbReference type="GO" id="GO:0003746">
    <property type="term" value="F:translation elongation factor activity"/>
    <property type="evidence" value="ECO:0007669"/>
    <property type="project" value="UniProtKB-UniRule"/>
</dbReference>
<dbReference type="GO" id="GO:0045727">
    <property type="term" value="P:positive regulation of translation"/>
    <property type="evidence" value="ECO:0007669"/>
    <property type="project" value="UniProtKB-UniRule"/>
</dbReference>
<dbReference type="CDD" id="cd16260">
    <property type="entry name" value="EF4_III"/>
    <property type="match status" value="1"/>
</dbReference>
<dbReference type="CDD" id="cd01890">
    <property type="entry name" value="LepA"/>
    <property type="match status" value="1"/>
</dbReference>
<dbReference type="CDD" id="cd03709">
    <property type="entry name" value="lepA_C"/>
    <property type="match status" value="1"/>
</dbReference>
<dbReference type="FunFam" id="3.40.50.300:FF:000078">
    <property type="entry name" value="Elongation factor 4"/>
    <property type="match status" value="1"/>
</dbReference>
<dbReference type="FunFam" id="2.40.30.10:FF:000015">
    <property type="entry name" value="Translation factor GUF1, mitochondrial"/>
    <property type="match status" value="1"/>
</dbReference>
<dbReference type="FunFam" id="3.30.70.240:FF:000007">
    <property type="entry name" value="Translation factor GUF1, mitochondrial"/>
    <property type="match status" value="1"/>
</dbReference>
<dbReference type="FunFam" id="3.30.70.2570:FF:000001">
    <property type="entry name" value="Translation factor GUF1, mitochondrial"/>
    <property type="match status" value="1"/>
</dbReference>
<dbReference type="FunFam" id="3.30.70.870:FF:000004">
    <property type="entry name" value="Translation factor GUF1, mitochondrial"/>
    <property type="match status" value="1"/>
</dbReference>
<dbReference type="Gene3D" id="3.30.70.240">
    <property type="match status" value="1"/>
</dbReference>
<dbReference type="Gene3D" id="3.30.70.2570">
    <property type="entry name" value="Elongation factor 4, C-terminal domain"/>
    <property type="match status" value="1"/>
</dbReference>
<dbReference type="Gene3D" id="3.30.70.870">
    <property type="entry name" value="Elongation Factor G (Translational Gtpase), domain 3"/>
    <property type="match status" value="1"/>
</dbReference>
<dbReference type="Gene3D" id="3.40.50.300">
    <property type="entry name" value="P-loop containing nucleotide triphosphate hydrolases"/>
    <property type="match status" value="1"/>
</dbReference>
<dbReference type="Gene3D" id="2.40.30.10">
    <property type="entry name" value="Translation factors"/>
    <property type="match status" value="1"/>
</dbReference>
<dbReference type="HAMAP" id="MF_00071">
    <property type="entry name" value="LepA"/>
    <property type="match status" value="1"/>
</dbReference>
<dbReference type="InterPro" id="IPR006297">
    <property type="entry name" value="EF-4"/>
</dbReference>
<dbReference type="InterPro" id="IPR035647">
    <property type="entry name" value="EFG_III/V"/>
</dbReference>
<dbReference type="InterPro" id="IPR000640">
    <property type="entry name" value="EFG_V-like"/>
</dbReference>
<dbReference type="InterPro" id="IPR004161">
    <property type="entry name" value="EFTu-like_2"/>
</dbReference>
<dbReference type="InterPro" id="IPR031157">
    <property type="entry name" value="G_TR_CS"/>
</dbReference>
<dbReference type="InterPro" id="IPR038363">
    <property type="entry name" value="LepA_C_sf"/>
</dbReference>
<dbReference type="InterPro" id="IPR013842">
    <property type="entry name" value="LepA_CTD"/>
</dbReference>
<dbReference type="InterPro" id="IPR035654">
    <property type="entry name" value="LepA_IV"/>
</dbReference>
<dbReference type="InterPro" id="IPR027417">
    <property type="entry name" value="P-loop_NTPase"/>
</dbReference>
<dbReference type="InterPro" id="IPR005225">
    <property type="entry name" value="Small_GTP-bd"/>
</dbReference>
<dbReference type="InterPro" id="IPR000795">
    <property type="entry name" value="T_Tr_GTP-bd_dom"/>
</dbReference>
<dbReference type="NCBIfam" id="TIGR01393">
    <property type="entry name" value="lepA"/>
    <property type="match status" value="1"/>
</dbReference>
<dbReference type="NCBIfam" id="TIGR00231">
    <property type="entry name" value="small_GTP"/>
    <property type="match status" value="1"/>
</dbReference>
<dbReference type="PANTHER" id="PTHR43512:SF4">
    <property type="entry name" value="TRANSLATION FACTOR GUF1 HOMOLOG, CHLOROPLASTIC"/>
    <property type="match status" value="1"/>
</dbReference>
<dbReference type="PANTHER" id="PTHR43512">
    <property type="entry name" value="TRANSLATION FACTOR GUF1-RELATED"/>
    <property type="match status" value="1"/>
</dbReference>
<dbReference type="Pfam" id="PF00679">
    <property type="entry name" value="EFG_C"/>
    <property type="match status" value="1"/>
</dbReference>
<dbReference type="Pfam" id="PF00009">
    <property type="entry name" value="GTP_EFTU"/>
    <property type="match status" value="1"/>
</dbReference>
<dbReference type="Pfam" id="PF03144">
    <property type="entry name" value="GTP_EFTU_D2"/>
    <property type="match status" value="1"/>
</dbReference>
<dbReference type="Pfam" id="PF06421">
    <property type="entry name" value="LepA_C"/>
    <property type="match status" value="1"/>
</dbReference>
<dbReference type="PRINTS" id="PR00315">
    <property type="entry name" value="ELONGATNFCT"/>
</dbReference>
<dbReference type="SMART" id="SM00838">
    <property type="entry name" value="EFG_C"/>
    <property type="match status" value="1"/>
</dbReference>
<dbReference type="SUPFAM" id="SSF54980">
    <property type="entry name" value="EF-G C-terminal domain-like"/>
    <property type="match status" value="2"/>
</dbReference>
<dbReference type="SUPFAM" id="SSF52540">
    <property type="entry name" value="P-loop containing nucleoside triphosphate hydrolases"/>
    <property type="match status" value="1"/>
</dbReference>
<dbReference type="PROSITE" id="PS00301">
    <property type="entry name" value="G_TR_1"/>
    <property type="match status" value="1"/>
</dbReference>
<dbReference type="PROSITE" id="PS51722">
    <property type="entry name" value="G_TR_2"/>
    <property type="match status" value="1"/>
</dbReference>
<feature type="chain" id="PRO_0000176332" description="Elongation factor 4">
    <location>
        <begin position="1"/>
        <end position="603"/>
    </location>
</feature>
<feature type="domain" description="tr-type G">
    <location>
        <begin position="7"/>
        <end position="191"/>
    </location>
</feature>
<feature type="binding site" evidence="1">
    <location>
        <begin position="19"/>
        <end position="24"/>
    </location>
    <ligand>
        <name>GTP</name>
        <dbReference type="ChEBI" id="CHEBI:37565"/>
    </ligand>
</feature>
<feature type="binding site" evidence="1">
    <location>
        <begin position="138"/>
        <end position="141"/>
    </location>
    <ligand>
        <name>GTP</name>
        <dbReference type="ChEBI" id="CHEBI:37565"/>
    </ligand>
</feature>
<keyword id="KW-0997">Cell inner membrane</keyword>
<keyword id="KW-1003">Cell membrane</keyword>
<keyword id="KW-0342">GTP-binding</keyword>
<keyword id="KW-0378">Hydrolase</keyword>
<keyword id="KW-0472">Membrane</keyword>
<keyword id="KW-0547">Nucleotide-binding</keyword>
<keyword id="KW-0648">Protein biosynthesis</keyword>